<dbReference type="EC" id="6.3.4.4" evidence="1"/>
<dbReference type="EMBL" id="CP000826">
    <property type="protein sequence ID" value="ABV39544.1"/>
    <property type="molecule type" value="Genomic_DNA"/>
</dbReference>
<dbReference type="SMR" id="A8G8V4"/>
<dbReference type="STRING" id="399741.Spro_0436"/>
<dbReference type="KEGG" id="spe:Spro_0436"/>
<dbReference type="eggNOG" id="COG0104">
    <property type="taxonomic scope" value="Bacteria"/>
</dbReference>
<dbReference type="HOGENOM" id="CLU_029848_0_0_6"/>
<dbReference type="OrthoDB" id="9807553at2"/>
<dbReference type="UniPathway" id="UPA00075">
    <property type="reaction ID" value="UER00335"/>
</dbReference>
<dbReference type="GO" id="GO:0005737">
    <property type="term" value="C:cytoplasm"/>
    <property type="evidence" value="ECO:0007669"/>
    <property type="project" value="UniProtKB-SubCell"/>
</dbReference>
<dbReference type="GO" id="GO:0004019">
    <property type="term" value="F:adenylosuccinate synthase activity"/>
    <property type="evidence" value="ECO:0007669"/>
    <property type="project" value="UniProtKB-UniRule"/>
</dbReference>
<dbReference type="GO" id="GO:0005525">
    <property type="term" value="F:GTP binding"/>
    <property type="evidence" value="ECO:0007669"/>
    <property type="project" value="UniProtKB-UniRule"/>
</dbReference>
<dbReference type="GO" id="GO:0000287">
    <property type="term" value="F:magnesium ion binding"/>
    <property type="evidence" value="ECO:0007669"/>
    <property type="project" value="UniProtKB-UniRule"/>
</dbReference>
<dbReference type="GO" id="GO:0044208">
    <property type="term" value="P:'de novo' AMP biosynthetic process"/>
    <property type="evidence" value="ECO:0007669"/>
    <property type="project" value="UniProtKB-UniRule"/>
</dbReference>
<dbReference type="GO" id="GO:0046040">
    <property type="term" value="P:IMP metabolic process"/>
    <property type="evidence" value="ECO:0007669"/>
    <property type="project" value="TreeGrafter"/>
</dbReference>
<dbReference type="CDD" id="cd03108">
    <property type="entry name" value="AdSS"/>
    <property type="match status" value="1"/>
</dbReference>
<dbReference type="FunFam" id="1.10.300.10:FF:000001">
    <property type="entry name" value="Adenylosuccinate synthetase"/>
    <property type="match status" value="1"/>
</dbReference>
<dbReference type="FunFam" id="3.90.170.10:FF:000001">
    <property type="entry name" value="Adenylosuccinate synthetase"/>
    <property type="match status" value="1"/>
</dbReference>
<dbReference type="Gene3D" id="3.40.440.10">
    <property type="entry name" value="Adenylosuccinate Synthetase, subunit A, domain 1"/>
    <property type="match status" value="1"/>
</dbReference>
<dbReference type="Gene3D" id="1.10.300.10">
    <property type="entry name" value="Adenylosuccinate Synthetase, subunit A, domain 2"/>
    <property type="match status" value="1"/>
</dbReference>
<dbReference type="Gene3D" id="3.90.170.10">
    <property type="entry name" value="Adenylosuccinate Synthetase, subunit A, domain 3"/>
    <property type="match status" value="1"/>
</dbReference>
<dbReference type="HAMAP" id="MF_00011">
    <property type="entry name" value="Adenylosucc_synth"/>
    <property type="match status" value="1"/>
</dbReference>
<dbReference type="InterPro" id="IPR018220">
    <property type="entry name" value="Adenylosuccin_syn_GTP-bd"/>
</dbReference>
<dbReference type="InterPro" id="IPR033128">
    <property type="entry name" value="Adenylosuccin_syn_Lys_AS"/>
</dbReference>
<dbReference type="InterPro" id="IPR042109">
    <property type="entry name" value="Adenylosuccinate_synth_dom1"/>
</dbReference>
<dbReference type="InterPro" id="IPR042110">
    <property type="entry name" value="Adenylosuccinate_synth_dom2"/>
</dbReference>
<dbReference type="InterPro" id="IPR042111">
    <property type="entry name" value="Adenylosuccinate_synth_dom3"/>
</dbReference>
<dbReference type="InterPro" id="IPR001114">
    <property type="entry name" value="Adenylosuccinate_synthetase"/>
</dbReference>
<dbReference type="InterPro" id="IPR027417">
    <property type="entry name" value="P-loop_NTPase"/>
</dbReference>
<dbReference type="NCBIfam" id="NF002223">
    <property type="entry name" value="PRK01117.1"/>
    <property type="match status" value="1"/>
</dbReference>
<dbReference type="NCBIfam" id="TIGR00184">
    <property type="entry name" value="purA"/>
    <property type="match status" value="1"/>
</dbReference>
<dbReference type="PANTHER" id="PTHR11846">
    <property type="entry name" value="ADENYLOSUCCINATE SYNTHETASE"/>
    <property type="match status" value="1"/>
</dbReference>
<dbReference type="PANTHER" id="PTHR11846:SF0">
    <property type="entry name" value="ADENYLOSUCCINATE SYNTHETASE"/>
    <property type="match status" value="1"/>
</dbReference>
<dbReference type="Pfam" id="PF00709">
    <property type="entry name" value="Adenylsucc_synt"/>
    <property type="match status" value="1"/>
</dbReference>
<dbReference type="SMART" id="SM00788">
    <property type="entry name" value="Adenylsucc_synt"/>
    <property type="match status" value="1"/>
</dbReference>
<dbReference type="SUPFAM" id="SSF52540">
    <property type="entry name" value="P-loop containing nucleoside triphosphate hydrolases"/>
    <property type="match status" value="1"/>
</dbReference>
<dbReference type="PROSITE" id="PS01266">
    <property type="entry name" value="ADENYLOSUCCIN_SYN_1"/>
    <property type="match status" value="1"/>
</dbReference>
<dbReference type="PROSITE" id="PS00513">
    <property type="entry name" value="ADENYLOSUCCIN_SYN_2"/>
    <property type="match status" value="1"/>
</dbReference>
<gene>
    <name evidence="1" type="primary">purA</name>
    <name type="ordered locus">Spro_0436</name>
</gene>
<proteinExistence type="inferred from homology"/>
<organism>
    <name type="scientific">Serratia proteamaculans (strain 568)</name>
    <dbReference type="NCBI Taxonomy" id="399741"/>
    <lineage>
        <taxon>Bacteria</taxon>
        <taxon>Pseudomonadati</taxon>
        <taxon>Pseudomonadota</taxon>
        <taxon>Gammaproteobacteria</taxon>
        <taxon>Enterobacterales</taxon>
        <taxon>Yersiniaceae</taxon>
        <taxon>Serratia</taxon>
    </lineage>
</organism>
<name>PURA_SERP5</name>
<sequence length="432" mass="47130">MGKNVVVLGTQWGDEGKGKVVDLLTERAQYVVRYQGGHNAGHTLVINGEKTVLHLIPSGILRENVTSIIGNGVVLAPDALMKEMGELEARGIPVRERLLLSEACPLILPYHVALDNAREKARGAKAIGTTGRGIGPAYEDKVARRGLRVSDLFNKETFAVKLKEIVDYHNFQLVNYYKVEAVDYQATLDYVLSIADILTAMVVDVSELLDGARKRGDLIMFEGAQGTLLDIDHGTYPYVTSSNTTAGGVATGSGIGPRYVDYVLGIVKAYSTRVGAGPFPTELFDETGEFLCKQGNEFGATTGRRRRTGWLDAVAVRRSVQINSLSGFCLTKLDVLDGLKEVKICVGYRMPDGREMTTTPLAAEGWEGIEPIYESMPGWSDTTFGVKEHSKLPQAALNYIKRIEELTGVPVDIISTGPDRSETMILRDPFDA</sequence>
<reference key="1">
    <citation type="submission" date="2007-09" db="EMBL/GenBank/DDBJ databases">
        <title>Complete sequence of chromosome of Serratia proteamaculans 568.</title>
        <authorList>
            <consortium name="US DOE Joint Genome Institute"/>
            <person name="Copeland A."/>
            <person name="Lucas S."/>
            <person name="Lapidus A."/>
            <person name="Barry K."/>
            <person name="Glavina del Rio T."/>
            <person name="Dalin E."/>
            <person name="Tice H."/>
            <person name="Pitluck S."/>
            <person name="Chain P."/>
            <person name="Malfatti S."/>
            <person name="Shin M."/>
            <person name="Vergez L."/>
            <person name="Schmutz J."/>
            <person name="Larimer F."/>
            <person name="Land M."/>
            <person name="Hauser L."/>
            <person name="Kyrpides N."/>
            <person name="Kim E."/>
            <person name="Taghavi S."/>
            <person name="Newman L."/>
            <person name="Vangronsveld J."/>
            <person name="van der Lelie D."/>
            <person name="Richardson P."/>
        </authorList>
    </citation>
    <scope>NUCLEOTIDE SEQUENCE [LARGE SCALE GENOMIC DNA]</scope>
    <source>
        <strain>568</strain>
    </source>
</reference>
<feature type="chain" id="PRO_1000057092" description="Adenylosuccinate synthetase">
    <location>
        <begin position="1"/>
        <end position="432"/>
    </location>
</feature>
<feature type="active site" description="Proton acceptor" evidence="1">
    <location>
        <position position="14"/>
    </location>
</feature>
<feature type="active site" description="Proton donor" evidence="1">
    <location>
        <position position="42"/>
    </location>
</feature>
<feature type="binding site" evidence="1">
    <location>
        <begin position="13"/>
        <end position="19"/>
    </location>
    <ligand>
        <name>GTP</name>
        <dbReference type="ChEBI" id="CHEBI:37565"/>
    </ligand>
</feature>
<feature type="binding site" description="in other chain" evidence="1">
    <location>
        <begin position="14"/>
        <end position="17"/>
    </location>
    <ligand>
        <name>IMP</name>
        <dbReference type="ChEBI" id="CHEBI:58053"/>
        <note>ligand shared between dimeric partners</note>
    </ligand>
</feature>
<feature type="binding site" evidence="1">
    <location>
        <position position="14"/>
    </location>
    <ligand>
        <name>Mg(2+)</name>
        <dbReference type="ChEBI" id="CHEBI:18420"/>
    </ligand>
</feature>
<feature type="binding site" description="in other chain" evidence="1">
    <location>
        <begin position="39"/>
        <end position="42"/>
    </location>
    <ligand>
        <name>IMP</name>
        <dbReference type="ChEBI" id="CHEBI:58053"/>
        <note>ligand shared between dimeric partners</note>
    </ligand>
</feature>
<feature type="binding site" evidence="1">
    <location>
        <begin position="41"/>
        <end position="43"/>
    </location>
    <ligand>
        <name>GTP</name>
        <dbReference type="ChEBI" id="CHEBI:37565"/>
    </ligand>
</feature>
<feature type="binding site" evidence="1">
    <location>
        <position position="41"/>
    </location>
    <ligand>
        <name>Mg(2+)</name>
        <dbReference type="ChEBI" id="CHEBI:18420"/>
    </ligand>
</feature>
<feature type="binding site" description="in other chain" evidence="1">
    <location>
        <position position="130"/>
    </location>
    <ligand>
        <name>IMP</name>
        <dbReference type="ChEBI" id="CHEBI:58053"/>
        <note>ligand shared between dimeric partners</note>
    </ligand>
</feature>
<feature type="binding site" evidence="1">
    <location>
        <position position="144"/>
    </location>
    <ligand>
        <name>IMP</name>
        <dbReference type="ChEBI" id="CHEBI:58053"/>
        <note>ligand shared between dimeric partners</note>
    </ligand>
</feature>
<feature type="binding site" description="in other chain" evidence="1">
    <location>
        <position position="225"/>
    </location>
    <ligand>
        <name>IMP</name>
        <dbReference type="ChEBI" id="CHEBI:58053"/>
        <note>ligand shared between dimeric partners</note>
    </ligand>
</feature>
<feature type="binding site" description="in other chain" evidence="1">
    <location>
        <position position="240"/>
    </location>
    <ligand>
        <name>IMP</name>
        <dbReference type="ChEBI" id="CHEBI:58053"/>
        <note>ligand shared between dimeric partners</note>
    </ligand>
</feature>
<feature type="binding site" evidence="1">
    <location>
        <begin position="300"/>
        <end position="306"/>
    </location>
    <ligand>
        <name>substrate</name>
    </ligand>
</feature>
<feature type="binding site" description="in other chain" evidence="1">
    <location>
        <position position="304"/>
    </location>
    <ligand>
        <name>IMP</name>
        <dbReference type="ChEBI" id="CHEBI:58053"/>
        <note>ligand shared between dimeric partners</note>
    </ligand>
</feature>
<feature type="binding site" evidence="1">
    <location>
        <position position="306"/>
    </location>
    <ligand>
        <name>GTP</name>
        <dbReference type="ChEBI" id="CHEBI:37565"/>
    </ligand>
</feature>
<feature type="binding site" evidence="1">
    <location>
        <begin position="332"/>
        <end position="334"/>
    </location>
    <ligand>
        <name>GTP</name>
        <dbReference type="ChEBI" id="CHEBI:37565"/>
    </ligand>
</feature>
<feature type="binding site" evidence="1">
    <location>
        <begin position="415"/>
        <end position="417"/>
    </location>
    <ligand>
        <name>GTP</name>
        <dbReference type="ChEBI" id="CHEBI:37565"/>
    </ligand>
</feature>
<comment type="function">
    <text evidence="1">Plays an important role in the de novo pathway of purine nucleotide biosynthesis. Catalyzes the first committed step in the biosynthesis of AMP from IMP.</text>
</comment>
<comment type="catalytic activity">
    <reaction evidence="1">
        <text>IMP + L-aspartate + GTP = N(6)-(1,2-dicarboxyethyl)-AMP + GDP + phosphate + 2 H(+)</text>
        <dbReference type="Rhea" id="RHEA:15753"/>
        <dbReference type="ChEBI" id="CHEBI:15378"/>
        <dbReference type="ChEBI" id="CHEBI:29991"/>
        <dbReference type="ChEBI" id="CHEBI:37565"/>
        <dbReference type="ChEBI" id="CHEBI:43474"/>
        <dbReference type="ChEBI" id="CHEBI:57567"/>
        <dbReference type="ChEBI" id="CHEBI:58053"/>
        <dbReference type="ChEBI" id="CHEBI:58189"/>
        <dbReference type="EC" id="6.3.4.4"/>
    </reaction>
</comment>
<comment type="cofactor">
    <cofactor evidence="1">
        <name>Mg(2+)</name>
        <dbReference type="ChEBI" id="CHEBI:18420"/>
    </cofactor>
    <text evidence="1">Binds 1 Mg(2+) ion per subunit.</text>
</comment>
<comment type="pathway">
    <text evidence="1">Purine metabolism; AMP biosynthesis via de novo pathway; AMP from IMP: step 1/2.</text>
</comment>
<comment type="subunit">
    <text evidence="1">Homodimer.</text>
</comment>
<comment type="subcellular location">
    <subcellularLocation>
        <location evidence="1">Cytoplasm</location>
    </subcellularLocation>
</comment>
<comment type="similarity">
    <text evidence="1">Belongs to the adenylosuccinate synthetase family.</text>
</comment>
<protein>
    <recommendedName>
        <fullName evidence="1">Adenylosuccinate synthetase</fullName>
        <shortName evidence="1">AMPSase</shortName>
        <shortName evidence="1">AdSS</shortName>
        <ecNumber evidence="1">6.3.4.4</ecNumber>
    </recommendedName>
    <alternativeName>
        <fullName evidence="1">IMP--aspartate ligase</fullName>
    </alternativeName>
</protein>
<evidence type="ECO:0000255" key="1">
    <source>
        <dbReference type="HAMAP-Rule" id="MF_00011"/>
    </source>
</evidence>
<accession>A8G8V4</accession>
<keyword id="KW-0963">Cytoplasm</keyword>
<keyword id="KW-0342">GTP-binding</keyword>
<keyword id="KW-0436">Ligase</keyword>
<keyword id="KW-0460">Magnesium</keyword>
<keyword id="KW-0479">Metal-binding</keyword>
<keyword id="KW-0547">Nucleotide-binding</keyword>
<keyword id="KW-0658">Purine biosynthesis</keyword>